<dbReference type="EC" id="3.1.3.11"/>
<dbReference type="EMBL" id="D42083">
    <property type="protein sequence ID" value="BAA07678.1"/>
    <property type="status" value="ALT_FRAME"/>
    <property type="molecule type" value="mRNA"/>
</dbReference>
<dbReference type="EMBL" id="AJ132692">
    <property type="protein sequence ID" value="CAB65243.1"/>
    <property type="molecule type" value="mRNA"/>
</dbReference>
<dbReference type="EMBL" id="AJ243020">
    <property type="protein sequence ID" value="CAB90667.1"/>
    <property type="molecule type" value="Genomic_DNA"/>
</dbReference>
<dbReference type="EMBL" id="AJ243021">
    <property type="protein sequence ID" value="CAB90668.1"/>
    <property type="molecule type" value="Genomic_DNA"/>
</dbReference>
<dbReference type="EMBL" id="AJ243022">
    <property type="protein sequence ID" value="CAB90669.1"/>
    <property type="molecule type" value="Genomic_DNA"/>
</dbReference>
<dbReference type="EMBL" id="AJ243023">
    <property type="protein sequence ID" value="CAB90670.1"/>
    <property type="molecule type" value="Genomic_DNA"/>
</dbReference>
<dbReference type="EMBL" id="AJ243024">
    <property type="protein sequence ID" value="CAB90671.1"/>
    <property type="molecule type" value="Genomic_DNA"/>
</dbReference>
<dbReference type="EMBL" id="AJ243025">
    <property type="protein sequence ID" value="CAB90672.1"/>
    <property type="molecule type" value="Genomic_DNA"/>
</dbReference>
<dbReference type="EMBL" id="AJ243026">
    <property type="protein sequence ID" value="CAB90673.1"/>
    <property type="molecule type" value="Genomic_DNA"/>
</dbReference>
<dbReference type="EMBL" id="AJ243027">
    <property type="protein sequence ID" value="CAB90674.1"/>
    <property type="molecule type" value="Genomic_DNA"/>
</dbReference>
<dbReference type="EMBL" id="AJ243028">
    <property type="protein sequence ID" value="CAB90675.1"/>
    <property type="molecule type" value="Genomic_DNA"/>
</dbReference>
<dbReference type="EMBL" id="AJ245381">
    <property type="protein sequence ID" value="CAB65260.1"/>
    <property type="molecule type" value="Genomic_DNA"/>
</dbReference>
<dbReference type="EMBL" id="AJ245382">
    <property type="protein sequence ID" value="CAB65261.1"/>
    <property type="molecule type" value="Genomic_DNA"/>
</dbReference>
<dbReference type="EMBL" id="AJ245383">
    <property type="protein sequence ID" value="CAB65262.1"/>
    <property type="molecule type" value="Genomic_DNA"/>
</dbReference>
<dbReference type="EMBL" id="BC012720">
    <property type="protein sequence ID" value="AAH12720.1"/>
    <property type="molecule type" value="mRNA"/>
</dbReference>
<dbReference type="CCDS" id="CCDS36698.1"/>
<dbReference type="PIR" id="S46245">
    <property type="entry name" value="S46245"/>
</dbReference>
<dbReference type="RefSeq" id="NP_032020.2">
    <property type="nucleotide sequence ID" value="NM_007994.4"/>
</dbReference>
<dbReference type="SMR" id="P70695"/>
<dbReference type="BioGRID" id="199609">
    <property type="interactions" value="2"/>
</dbReference>
<dbReference type="FunCoup" id="P70695">
    <property type="interactions" value="673"/>
</dbReference>
<dbReference type="STRING" id="10090.ENSMUSP00000021907"/>
<dbReference type="GlyGen" id="P70695">
    <property type="glycosylation" value="1 site, 1 O-linked glycan (1 site)"/>
</dbReference>
<dbReference type="iPTMnet" id="P70695"/>
<dbReference type="PhosphoSitePlus" id="P70695"/>
<dbReference type="jPOST" id="P70695"/>
<dbReference type="PaxDb" id="10090-ENSMUSP00000021907"/>
<dbReference type="PeptideAtlas" id="P70695"/>
<dbReference type="ProteomicsDB" id="275717"/>
<dbReference type="Antibodypedia" id="2920">
    <property type="antibodies" value="236 antibodies from 27 providers"/>
</dbReference>
<dbReference type="DNASU" id="14120"/>
<dbReference type="Ensembl" id="ENSMUST00000021907.9">
    <property type="protein sequence ID" value="ENSMUSP00000021907.8"/>
    <property type="gene ID" value="ENSMUSG00000021456.9"/>
</dbReference>
<dbReference type="GeneID" id="14120"/>
<dbReference type="KEGG" id="mmu:14120"/>
<dbReference type="UCSC" id="uc007qxf.1">
    <property type="organism name" value="mouse"/>
</dbReference>
<dbReference type="AGR" id="MGI:95491"/>
<dbReference type="CTD" id="8789"/>
<dbReference type="MGI" id="MGI:95491">
    <property type="gene designation" value="Fbp2"/>
</dbReference>
<dbReference type="VEuPathDB" id="HostDB:ENSMUSG00000021456"/>
<dbReference type="eggNOG" id="KOG1458">
    <property type="taxonomic scope" value="Eukaryota"/>
</dbReference>
<dbReference type="GeneTree" id="ENSGT00390000015513"/>
<dbReference type="HOGENOM" id="CLU_039977_1_0_1"/>
<dbReference type="InParanoid" id="P70695"/>
<dbReference type="OMA" id="NSRFWEP"/>
<dbReference type="OrthoDB" id="10256725at2759"/>
<dbReference type="PhylomeDB" id="P70695"/>
<dbReference type="TreeFam" id="TF314824"/>
<dbReference type="Reactome" id="R-MMU-70263">
    <property type="pathway name" value="Gluconeogenesis"/>
</dbReference>
<dbReference type="UniPathway" id="UPA00138"/>
<dbReference type="BioGRID-ORCS" id="14120">
    <property type="hits" value="2 hits in 78 CRISPR screens"/>
</dbReference>
<dbReference type="ChiTaRS" id="Fbp2">
    <property type="organism name" value="mouse"/>
</dbReference>
<dbReference type="PRO" id="PR:P70695"/>
<dbReference type="Proteomes" id="UP000000589">
    <property type="component" value="Chromosome 13"/>
</dbReference>
<dbReference type="RNAct" id="P70695">
    <property type="molecule type" value="protein"/>
</dbReference>
<dbReference type="Bgee" id="ENSMUSG00000021456">
    <property type="expression patterns" value="Expressed in small intestine Peyer's patch and 131 other cell types or tissues"/>
</dbReference>
<dbReference type="ExpressionAtlas" id="P70695">
    <property type="expression patterns" value="baseline and differential"/>
</dbReference>
<dbReference type="GO" id="GO:0070161">
    <property type="term" value="C:anchoring junction"/>
    <property type="evidence" value="ECO:0007669"/>
    <property type="project" value="UniProtKB-SubCell"/>
</dbReference>
<dbReference type="GO" id="GO:0005829">
    <property type="term" value="C:cytosol"/>
    <property type="evidence" value="ECO:0007669"/>
    <property type="project" value="Ensembl"/>
</dbReference>
<dbReference type="GO" id="GO:0005634">
    <property type="term" value="C:nucleus"/>
    <property type="evidence" value="ECO:0007669"/>
    <property type="project" value="UniProtKB-SubCell"/>
</dbReference>
<dbReference type="GO" id="GO:0005886">
    <property type="term" value="C:plasma membrane"/>
    <property type="evidence" value="ECO:0007669"/>
    <property type="project" value="Ensembl"/>
</dbReference>
<dbReference type="GO" id="GO:0030018">
    <property type="term" value="C:Z disc"/>
    <property type="evidence" value="ECO:0007669"/>
    <property type="project" value="UniProtKB-SubCell"/>
</dbReference>
<dbReference type="GO" id="GO:0042132">
    <property type="term" value="F:fructose 1,6-bisphosphate 1-phosphatase activity"/>
    <property type="evidence" value="ECO:0007669"/>
    <property type="project" value="UniProtKB-EC"/>
</dbReference>
<dbReference type="GO" id="GO:0042802">
    <property type="term" value="F:identical protein binding"/>
    <property type="evidence" value="ECO:0007669"/>
    <property type="project" value="Ensembl"/>
</dbReference>
<dbReference type="GO" id="GO:0046872">
    <property type="term" value="F:metal ion binding"/>
    <property type="evidence" value="ECO:0007669"/>
    <property type="project" value="UniProtKB-KW"/>
</dbReference>
<dbReference type="GO" id="GO:0006094">
    <property type="term" value="P:gluconeogenesis"/>
    <property type="evidence" value="ECO:0007669"/>
    <property type="project" value="UniProtKB-UniPathway"/>
</dbReference>
<dbReference type="CDD" id="cd00354">
    <property type="entry name" value="FBPase"/>
    <property type="match status" value="1"/>
</dbReference>
<dbReference type="FunFam" id="3.40.190.80:FF:000001">
    <property type="entry name" value="Fructose-1,6-bisphosphatase class 1"/>
    <property type="match status" value="1"/>
</dbReference>
<dbReference type="FunFam" id="3.30.540.10:FF:000005">
    <property type="entry name" value="Fructose-1,6-bisphosphatase isozyme 2"/>
    <property type="match status" value="1"/>
</dbReference>
<dbReference type="Gene3D" id="3.40.190.80">
    <property type="match status" value="1"/>
</dbReference>
<dbReference type="Gene3D" id="3.30.540.10">
    <property type="entry name" value="Fructose-1,6-Bisphosphatase, subunit A, domain 1"/>
    <property type="match status" value="1"/>
</dbReference>
<dbReference type="HAMAP" id="MF_01855">
    <property type="entry name" value="FBPase_class1"/>
    <property type="match status" value="1"/>
</dbReference>
<dbReference type="InterPro" id="IPR044015">
    <property type="entry name" value="FBPase_C_dom"/>
</dbReference>
<dbReference type="InterPro" id="IPR000146">
    <property type="entry name" value="FBPase_class-1"/>
</dbReference>
<dbReference type="InterPro" id="IPR033391">
    <property type="entry name" value="FBPase_N"/>
</dbReference>
<dbReference type="InterPro" id="IPR028343">
    <property type="entry name" value="FBPtase"/>
</dbReference>
<dbReference type="InterPro" id="IPR020548">
    <property type="entry name" value="Fructose_bisphosphatase_AS"/>
</dbReference>
<dbReference type="NCBIfam" id="NF006778">
    <property type="entry name" value="PRK09293.1-1"/>
    <property type="match status" value="1"/>
</dbReference>
<dbReference type="PANTHER" id="PTHR11556:SF13">
    <property type="entry name" value="FRUCTOSE-1,6-BISPHOSPHATASE ISOZYME 2"/>
    <property type="match status" value="1"/>
</dbReference>
<dbReference type="PANTHER" id="PTHR11556">
    <property type="entry name" value="FRUCTOSE-1,6-BISPHOSPHATASE-RELATED"/>
    <property type="match status" value="1"/>
</dbReference>
<dbReference type="Pfam" id="PF00316">
    <property type="entry name" value="FBPase"/>
    <property type="match status" value="1"/>
</dbReference>
<dbReference type="Pfam" id="PF18913">
    <property type="entry name" value="FBPase_C"/>
    <property type="match status" value="1"/>
</dbReference>
<dbReference type="PIRSF" id="PIRSF500210">
    <property type="entry name" value="FBPtase"/>
    <property type="match status" value="1"/>
</dbReference>
<dbReference type="PIRSF" id="PIRSF000904">
    <property type="entry name" value="FBPtase_SBPase"/>
    <property type="match status" value="1"/>
</dbReference>
<dbReference type="PRINTS" id="PR00115">
    <property type="entry name" value="F16BPHPHTASE"/>
</dbReference>
<dbReference type="SUPFAM" id="SSF56655">
    <property type="entry name" value="Carbohydrate phosphatase"/>
    <property type="match status" value="1"/>
</dbReference>
<dbReference type="PROSITE" id="PS00124">
    <property type="entry name" value="FBPASE"/>
    <property type="match status" value="1"/>
</dbReference>
<reference key="1">
    <citation type="journal article" date="1994" name="FEBS Lett.">
        <title>One of the retinoic acid-inducible cDNA clones in mouse embryonal carcinoma F9 cells encodes a novel isoenzyme of fructose 1,6-bisphosphatase.</title>
        <authorList>
            <person name="Nomura M."/>
            <person name="Takihara Y."/>
            <person name="Yasunaga T."/>
            <person name="Shimada K."/>
        </authorList>
    </citation>
    <scope>NUCLEOTIDE SEQUENCE [MRNA]</scope>
    <scope>FUNCTION</scope>
    <scope>TISSUE SPECIFICITY</scope>
    <scope>INDUCTION</scope>
    <source>
        <strain>BALB/cJ</strain>
    </source>
</reference>
<reference key="2">
    <citation type="journal article" date="2000" name="Gene">
        <title>Structure and chromosomal localization of the human and mouse muscle fructose-1,6-bisphosphatase genes.</title>
        <authorList>
            <person name="Tillmann H."/>
            <person name="Stein S."/>
            <person name="Liehr T."/>
            <person name="Eschrich K."/>
        </authorList>
    </citation>
    <scope>NUCLEOTIDE SEQUENCE [GENOMIC DNA / MRNA]</scope>
    <source>
        <tissue>Skeletal muscle</tissue>
    </source>
</reference>
<reference key="3">
    <citation type="journal article" date="2004" name="Genome Res.">
        <title>The status, quality, and expansion of the NIH full-length cDNA project: the Mammalian Gene Collection (MGC).</title>
        <authorList>
            <consortium name="The MGC Project Team"/>
        </authorList>
    </citation>
    <scope>NUCLEOTIDE SEQUENCE [LARGE SCALE MRNA]</scope>
    <source>
        <strain>FVB/N</strain>
        <tissue>Colon</tissue>
    </source>
</reference>
<reference key="4">
    <citation type="journal article" date="2001" name="Gene">
        <title>Characterization of the mouse liver fructose-1,6-bisphosphatase gene.</title>
        <authorList>
            <person name="Stein S."/>
            <person name="Liehr T."/>
            <person name="Eschrich K."/>
        </authorList>
    </citation>
    <scope>TISSUE SPECIFICITY</scope>
</reference>
<reference key="5">
    <citation type="journal article" date="2010" name="Cell">
        <title>A tissue-specific atlas of mouse protein phosphorylation and expression.</title>
        <authorList>
            <person name="Huttlin E.L."/>
            <person name="Jedrychowski M.P."/>
            <person name="Elias J.E."/>
            <person name="Goswami T."/>
            <person name="Rad R."/>
            <person name="Beausoleil S.A."/>
            <person name="Villen J."/>
            <person name="Haas W."/>
            <person name="Sowa M.E."/>
            <person name="Gygi S.P."/>
        </authorList>
    </citation>
    <scope>IDENTIFICATION BY MASS SPECTROMETRY [LARGE SCALE ANALYSIS]</scope>
    <source>
        <tissue>Brown adipose tissue</tissue>
        <tissue>Heart</tissue>
        <tissue>Kidney</tissue>
        <tissue>Lung</tissue>
    </source>
</reference>
<proteinExistence type="evidence at protein level"/>
<evidence type="ECO:0000250" key="1"/>
<evidence type="ECO:0000250" key="2">
    <source>
        <dbReference type="UniProtKB" id="Q9Z1N1"/>
    </source>
</evidence>
<evidence type="ECO:0000269" key="3">
    <source>
    </source>
</evidence>
<evidence type="ECO:0000269" key="4">
    <source>
    </source>
</evidence>
<evidence type="ECO:0000305" key="5"/>
<sequence>MTDRSPFETDMLTLTRYVMEKGRQAKGTGELTQLLNSMLTAIKAISSAVRKAGLANLYGISGSVNVTGDEVKKLDVLSNSLVINMLQSSYSTCVLVSEENKEAVITAQERRGKYVVCFDPLDGSSNIDCLASIGTIFAIYRKTTEDEPSEKDALQPGRNIVAAGYALYGSATLVALSTGQGVDLFMLDPALGEFVLVEKDVRIKKKGKIFSLNEGYAKYFDAATAEYVQKKKFPEDGSEPYGARYVGSMVADVHRTLVYGGIFMYPANQKSPNGKLRLLYECNPVAYIIEQAGGMATTGTQPVLDVKPESIHQRVPLILGSPEDVQEYLSCVQRNQAGR</sequence>
<organism>
    <name type="scientific">Mus musculus</name>
    <name type="common">Mouse</name>
    <dbReference type="NCBI Taxonomy" id="10090"/>
    <lineage>
        <taxon>Eukaryota</taxon>
        <taxon>Metazoa</taxon>
        <taxon>Chordata</taxon>
        <taxon>Craniata</taxon>
        <taxon>Vertebrata</taxon>
        <taxon>Euteleostomi</taxon>
        <taxon>Mammalia</taxon>
        <taxon>Eutheria</taxon>
        <taxon>Euarchontoglires</taxon>
        <taxon>Glires</taxon>
        <taxon>Rodentia</taxon>
        <taxon>Myomorpha</taxon>
        <taxon>Muroidea</taxon>
        <taxon>Muridae</taxon>
        <taxon>Murinae</taxon>
        <taxon>Mus</taxon>
        <taxon>Mus</taxon>
    </lineage>
</organism>
<protein>
    <recommendedName>
        <fullName>Fructose-1,6-bisphosphatase isozyme 2</fullName>
        <shortName>FBPase 2</shortName>
        <ecNumber>3.1.3.11</ecNumber>
    </recommendedName>
    <alternativeName>
        <fullName>D-fructose-1,6-bisphosphate 1-phosphohydrolase 2</fullName>
    </alternativeName>
    <alternativeName>
        <fullName>Muscle FBPase</fullName>
    </alternativeName>
    <alternativeName>
        <fullName>RAE-30</fullName>
    </alternativeName>
</protein>
<gene>
    <name type="primary">Fbp2</name>
</gene>
<name>F16P2_MOUSE</name>
<accession>P70695</accession>
<accession>Q91X26</accession>
<accession>Q9JK01</accession>
<accession>Q9JK02</accession>
<accession>Q9JK03</accession>
<accession>Q9JK04</accession>
<accession>Q9JK05</accession>
<accession>Q9JK06</accession>
<accession>Q9JK07</accession>
<accession>Q9JK08</accession>
<accession>Q9JK09</accession>
<accession>Q9QXB4</accession>
<accession>Q9QXB5</accession>
<accession>Q9QXB6</accession>
<accession>Q9QXD7</accession>
<feature type="chain" id="PRO_0000200505" description="Fructose-1,6-bisphosphatase isozyme 2">
    <location>
        <begin position="1"/>
        <end position="339"/>
    </location>
</feature>
<feature type="region of interest" description="Important for interaction with ALDOA" evidence="1">
    <location>
        <begin position="3"/>
        <end position="10"/>
    </location>
</feature>
<feature type="short sequence motif" description="Nuclear localization signal" evidence="1">
    <location>
        <begin position="204"/>
        <end position="208"/>
    </location>
</feature>
<feature type="binding site" evidence="1">
    <location>
        <position position="18"/>
    </location>
    <ligand>
        <name>AMP</name>
        <dbReference type="ChEBI" id="CHEBI:456215"/>
    </ligand>
</feature>
<feature type="binding site" evidence="1">
    <location>
        <begin position="28"/>
        <end position="32"/>
    </location>
    <ligand>
        <name>AMP</name>
        <dbReference type="ChEBI" id="CHEBI:456215"/>
    </ligand>
</feature>
<feature type="binding site" evidence="1">
    <location>
        <position position="69"/>
    </location>
    <ligand>
        <name>Mg(2+)</name>
        <dbReference type="ChEBI" id="CHEBI:18420"/>
        <label>1</label>
    </ligand>
</feature>
<feature type="binding site" evidence="1">
    <location>
        <position position="98"/>
    </location>
    <ligand>
        <name>Mg(2+)</name>
        <dbReference type="ChEBI" id="CHEBI:18420"/>
        <label>1</label>
    </ligand>
</feature>
<feature type="binding site" evidence="1">
    <location>
        <position position="98"/>
    </location>
    <ligand>
        <name>Mg(2+)</name>
        <dbReference type="ChEBI" id="CHEBI:18420"/>
        <label>2</label>
    </ligand>
</feature>
<feature type="binding site" evidence="1">
    <location>
        <begin position="113"/>
        <end position="114"/>
    </location>
    <ligand>
        <name>AMP</name>
        <dbReference type="ChEBI" id="CHEBI:456215"/>
    </ligand>
</feature>
<feature type="binding site" evidence="1">
    <location>
        <position position="119"/>
    </location>
    <ligand>
        <name>Mg(2+)</name>
        <dbReference type="ChEBI" id="CHEBI:18420"/>
        <label>2</label>
    </ligand>
</feature>
<feature type="binding site" evidence="1">
    <location>
        <position position="119"/>
    </location>
    <ligand>
        <name>Mg(2+)</name>
        <dbReference type="ChEBI" id="CHEBI:18420"/>
        <label>3</label>
    </ligand>
</feature>
<feature type="binding site" evidence="1">
    <location>
        <position position="121"/>
    </location>
    <ligand>
        <name>Mg(2+)</name>
        <dbReference type="ChEBI" id="CHEBI:18420"/>
        <label>2</label>
    </ligand>
</feature>
<feature type="binding site" evidence="1">
    <location>
        <position position="122"/>
    </location>
    <ligand>
        <name>Mg(2+)</name>
        <dbReference type="ChEBI" id="CHEBI:18420"/>
        <label>3</label>
    </ligand>
</feature>
<feature type="binding site" evidence="1">
    <location>
        <position position="122"/>
    </location>
    <ligand>
        <name>substrate</name>
    </ligand>
</feature>
<feature type="binding site" evidence="1">
    <location>
        <position position="141"/>
    </location>
    <ligand>
        <name>AMP</name>
        <dbReference type="ChEBI" id="CHEBI:456215"/>
    </ligand>
</feature>
<feature type="binding site" evidence="1">
    <location>
        <begin position="213"/>
        <end position="216"/>
    </location>
    <ligand>
        <name>substrate</name>
    </ligand>
</feature>
<feature type="binding site" evidence="1">
    <location>
        <begin position="245"/>
        <end position="249"/>
    </location>
    <ligand>
        <name>substrate</name>
    </ligand>
</feature>
<feature type="binding site" evidence="1">
    <location>
        <position position="265"/>
    </location>
    <ligand>
        <name>substrate</name>
    </ligand>
</feature>
<feature type="binding site" evidence="1">
    <location>
        <position position="275"/>
    </location>
    <ligand>
        <name>substrate</name>
    </ligand>
</feature>
<feature type="binding site" evidence="1">
    <location>
        <position position="281"/>
    </location>
    <ligand>
        <name>Mg(2+)</name>
        <dbReference type="ChEBI" id="CHEBI:18420"/>
        <label>3</label>
    </ligand>
</feature>
<feature type="site" description="Important for the conversion from active R-state to inactive T-state in the presence of AMP" evidence="1">
    <location>
        <position position="33"/>
    </location>
</feature>
<feature type="modified residue" description="Phosphotyrosine" evidence="2">
    <location>
        <position position="216"/>
    </location>
</feature>
<feature type="modified residue" description="Phosphotyrosine" evidence="2">
    <location>
        <position position="219"/>
    </location>
</feature>
<feature type="sequence conflict" description="In Ref. 1; BAA07678." evidence="5" ref="1">
    <original>A</original>
    <variation>R</variation>
    <location>
        <position position="171"/>
    </location>
</feature>
<feature type="sequence conflict" description="In Ref. 3; AAH12720." evidence="5" ref="3">
    <original>E</original>
    <variation>A</variation>
    <location>
        <position position="239"/>
    </location>
</feature>
<comment type="function">
    <text evidence="4">Catalyzes the hydrolysis of fructose 1,6-bisphosphate to fructose 6-phosphate in the presence of divalent cations and probably participates in glycogen synthesis from carbohydrate precursors, such as lactate.</text>
</comment>
<comment type="catalytic activity">
    <reaction>
        <text>beta-D-fructose 1,6-bisphosphate + H2O = beta-D-fructose 6-phosphate + phosphate</text>
        <dbReference type="Rhea" id="RHEA:11064"/>
        <dbReference type="ChEBI" id="CHEBI:15377"/>
        <dbReference type="ChEBI" id="CHEBI:32966"/>
        <dbReference type="ChEBI" id="CHEBI:43474"/>
        <dbReference type="ChEBI" id="CHEBI:57634"/>
        <dbReference type="EC" id="3.1.3.11"/>
    </reaction>
</comment>
<comment type="cofactor">
    <cofactor evidence="1">
        <name>Mg(2+)</name>
        <dbReference type="ChEBI" id="CHEBI:18420"/>
    </cofactor>
    <text evidence="1">Binds 3 Mg(2+) ions per subunit.</text>
</comment>
<comment type="activity regulation">
    <text evidence="1">Subject to complex allosteric regulation. The enzyme can assume an active R-state, or an inactive T-state. Intermediate conformations may exist. AMP acts as an allosteric inhibitor. Fructose 2,6-bisphosphate acts as a competitive inhibitor. Strongly inhibited by Ca(2+) (By similarity).</text>
</comment>
<comment type="pathway">
    <text>Carbohydrate biosynthesis; gluconeogenesis.</text>
</comment>
<comment type="subunit">
    <text evidence="1">Homotetramer. Interacts with ALDOA; the interaction blocks inhibition by physiological concentrations of AMP and reduces inhibition by Ca(2+). Interacts with alpha-actinin and F-actin (By similarity).</text>
</comment>
<comment type="subcellular location">
    <subcellularLocation>
        <location evidence="1">Cell junction</location>
    </subcellularLocation>
    <subcellularLocation>
        <location evidence="1">Cytoplasm</location>
    </subcellularLocation>
    <subcellularLocation>
        <location evidence="1">Nucleus</location>
    </subcellularLocation>
    <subcellularLocation>
        <location evidence="1">Cytoplasm</location>
        <location evidence="1">Myofibril</location>
        <location evidence="1">Sarcomere</location>
        <location evidence="1">Z line</location>
    </subcellularLocation>
    <text evidence="1">In neonatal cardiomyocytes, distributed throughout the cytosol, accumulating in the intercalated disks which occur at the Z line of cardiomyocytes and connect adjacent cells, and also located in the nucleus; dissociates from the Z line following an increase in cytosolic Ca(2+) concentration. In muscle precursor cells, localizes predominantly to the nucleus and to a lesser extent to the cytoplasm at the proliferative phase, while mainly localizing to the cytoplasm at the differentiation phase. Colocalizes with ALDOA and alpha-actinin on both sides of the Z line of skeletal muscle; dissociates rapidly from the Z line following an increase in cytosolic Ca(2+) concentration.</text>
</comment>
<comment type="tissue specificity">
    <text evidence="3 4">Expressed in muscle, intestine, brain and placenta and very weakly in liver.</text>
</comment>
<comment type="induction">
    <text evidence="4">By retinoic acid.</text>
</comment>
<comment type="similarity">
    <text evidence="5">Belongs to the FBPase class 1 family.</text>
</comment>
<comment type="sequence caution" evidence="5">
    <conflict type="frameshift">
        <sequence resource="EMBL-CDS" id="BAA07678"/>
    </conflict>
</comment>
<keyword id="KW-0021">Allosteric enzyme</keyword>
<keyword id="KW-0106">Calcium</keyword>
<keyword id="KW-0119">Carbohydrate metabolism</keyword>
<keyword id="KW-0965">Cell junction</keyword>
<keyword id="KW-0963">Cytoplasm</keyword>
<keyword id="KW-0312">Gluconeogenesis</keyword>
<keyword id="KW-0378">Hydrolase</keyword>
<keyword id="KW-0460">Magnesium</keyword>
<keyword id="KW-0479">Metal-binding</keyword>
<keyword id="KW-0539">Nucleus</keyword>
<keyword id="KW-0597">Phosphoprotein</keyword>
<keyword id="KW-1185">Reference proteome</keyword>